<organism>
    <name type="scientific">Arabidopsis thaliana</name>
    <name type="common">Mouse-ear cress</name>
    <dbReference type="NCBI Taxonomy" id="3702"/>
    <lineage>
        <taxon>Eukaryota</taxon>
        <taxon>Viridiplantae</taxon>
        <taxon>Streptophyta</taxon>
        <taxon>Embryophyta</taxon>
        <taxon>Tracheophyta</taxon>
        <taxon>Spermatophyta</taxon>
        <taxon>Magnoliopsida</taxon>
        <taxon>eudicotyledons</taxon>
        <taxon>Gunneridae</taxon>
        <taxon>Pentapetalae</taxon>
        <taxon>rosids</taxon>
        <taxon>malvids</taxon>
        <taxon>Brassicales</taxon>
        <taxon>Brassicaceae</taxon>
        <taxon>Camelineae</taxon>
        <taxon>Arabidopsis</taxon>
    </lineage>
</organism>
<reference key="1">
    <citation type="journal article" date="1992" name="FEBS Lett.">
        <title>Cloning and sequence analysis of a cDNA clone from Arabidopsis thaliana homologous to a proteasome alpha subunit from Drosophila.</title>
        <authorList>
            <person name="Genschik P."/>
            <person name="Philipps G."/>
            <person name="Gigot C."/>
            <person name="Fleck J."/>
        </authorList>
    </citation>
    <scope>NUCLEOTIDE SEQUENCE [MRNA]</scope>
    <scope>TISSUE SPECIFICITY</scope>
    <source>
        <strain>cv. Columbia</strain>
    </source>
</reference>
<reference key="2">
    <citation type="journal article" date="1998" name="Genetics">
        <title>Molecular organization of the 20S proteasome gene family from Arabidopsis thaliana.</title>
        <authorList>
            <person name="Fu H."/>
            <person name="Doelling J.H."/>
            <person name="Arendt C.S."/>
            <person name="Hochstrasser M."/>
            <person name="Vierstra R.D."/>
        </authorList>
    </citation>
    <scope>NUCLEOTIDE SEQUENCE [MRNA]</scope>
    <scope>GENE FAMILY</scope>
    <scope>NOMENCLATURE</scope>
    <source>
        <strain>cv. Columbia</strain>
    </source>
</reference>
<reference key="3">
    <citation type="journal article" date="2000" name="Nature">
        <title>Sequence and analysis of chromosome 3 of the plant Arabidopsis thaliana.</title>
        <authorList>
            <person name="Salanoubat M."/>
            <person name="Lemcke K."/>
            <person name="Rieger M."/>
            <person name="Ansorge W."/>
            <person name="Unseld M."/>
            <person name="Fartmann B."/>
            <person name="Valle G."/>
            <person name="Bloecker H."/>
            <person name="Perez-Alonso M."/>
            <person name="Obermaier B."/>
            <person name="Delseny M."/>
            <person name="Boutry M."/>
            <person name="Grivell L.A."/>
            <person name="Mache R."/>
            <person name="Puigdomenech P."/>
            <person name="De Simone V."/>
            <person name="Choisne N."/>
            <person name="Artiguenave F."/>
            <person name="Robert C."/>
            <person name="Brottier P."/>
            <person name="Wincker P."/>
            <person name="Cattolico L."/>
            <person name="Weissenbach J."/>
            <person name="Saurin W."/>
            <person name="Quetier F."/>
            <person name="Schaefer M."/>
            <person name="Mueller-Auer S."/>
            <person name="Gabel C."/>
            <person name="Fuchs M."/>
            <person name="Benes V."/>
            <person name="Wurmbach E."/>
            <person name="Drzonek H."/>
            <person name="Erfle H."/>
            <person name="Jordan N."/>
            <person name="Bangert S."/>
            <person name="Wiedelmann R."/>
            <person name="Kranz H."/>
            <person name="Voss H."/>
            <person name="Holland R."/>
            <person name="Brandt P."/>
            <person name="Nyakatura G."/>
            <person name="Vezzi A."/>
            <person name="D'Angelo M."/>
            <person name="Pallavicini A."/>
            <person name="Toppo S."/>
            <person name="Simionati B."/>
            <person name="Conrad A."/>
            <person name="Hornischer K."/>
            <person name="Kauer G."/>
            <person name="Loehnert T.-H."/>
            <person name="Nordsiek G."/>
            <person name="Reichelt J."/>
            <person name="Scharfe M."/>
            <person name="Schoen O."/>
            <person name="Bargues M."/>
            <person name="Terol J."/>
            <person name="Climent J."/>
            <person name="Navarro P."/>
            <person name="Collado C."/>
            <person name="Perez-Perez A."/>
            <person name="Ottenwaelder B."/>
            <person name="Duchemin D."/>
            <person name="Cooke R."/>
            <person name="Laudie M."/>
            <person name="Berger-Llauro C."/>
            <person name="Purnelle B."/>
            <person name="Masuy D."/>
            <person name="de Haan M."/>
            <person name="Maarse A.C."/>
            <person name="Alcaraz J.-P."/>
            <person name="Cottet A."/>
            <person name="Casacuberta E."/>
            <person name="Monfort A."/>
            <person name="Argiriou A."/>
            <person name="Flores M."/>
            <person name="Liguori R."/>
            <person name="Vitale D."/>
            <person name="Mannhaupt G."/>
            <person name="Haase D."/>
            <person name="Schoof H."/>
            <person name="Rudd S."/>
            <person name="Zaccaria P."/>
            <person name="Mewes H.-W."/>
            <person name="Mayer K.F.X."/>
            <person name="Kaul S."/>
            <person name="Town C.D."/>
            <person name="Koo H.L."/>
            <person name="Tallon L.J."/>
            <person name="Jenkins J."/>
            <person name="Rooney T."/>
            <person name="Rizzo M."/>
            <person name="Walts A."/>
            <person name="Utterback T."/>
            <person name="Fujii C.Y."/>
            <person name="Shea T.P."/>
            <person name="Creasy T.H."/>
            <person name="Haas B."/>
            <person name="Maiti R."/>
            <person name="Wu D."/>
            <person name="Peterson J."/>
            <person name="Van Aken S."/>
            <person name="Pai G."/>
            <person name="Militscher J."/>
            <person name="Sellers P."/>
            <person name="Gill J.E."/>
            <person name="Feldblyum T.V."/>
            <person name="Preuss D."/>
            <person name="Lin X."/>
            <person name="Nierman W.C."/>
            <person name="Salzberg S.L."/>
            <person name="White O."/>
            <person name="Venter J.C."/>
            <person name="Fraser C.M."/>
            <person name="Kaneko T."/>
            <person name="Nakamura Y."/>
            <person name="Sato S."/>
            <person name="Kato T."/>
            <person name="Asamizu E."/>
            <person name="Sasamoto S."/>
            <person name="Kimura T."/>
            <person name="Idesawa K."/>
            <person name="Kawashima K."/>
            <person name="Kishida Y."/>
            <person name="Kiyokawa C."/>
            <person name="Kohara M."/>
            <person name="Matsumoto M."/>
            <person name="Matsuno A."/>
            <person name="Muraki A."/>
            <person name="Nakayama S."/>
            <person name="Nakazaki N."/>
            <person name="Shinpo S."/>
            <person name="Takeuchi C."/>
            <person name="Wada T."/>
            <person name="Watanabe A."/>
            <person name="Yamada M."/>
            <person name="Yasuda M."/>
            <person name="Tabata S."/>
        </authorList>
    </citation>
    <scope>NUCLEOTIDE SEQUENCE [LARGE SCALE GENOMIC DNA]</scope>
    <source>
        <strain>cv. Columbia</strain>
    </source>
</reference>
<reference key="4">
    <citation type="journal article" date="2017" name="Plant J.">
        <title>Araport11: a complete reannotation of the Arabidopsis thaliana reference genome.</title>
        <authorList>
            <person name="Cheng C.Y."/>
            <person name="Krishnakumar V."/>
            <person name="Chan A.P."/>
            <person name="Thibaud-Nissen F."/>
            <person name="Schobel S."/>
            <person name="Town C.D."/>
        </authorList>
    </citation>
    <scope>GENOME REANNOTATION</scope>
    <source>
        <strain>cv. Columbia</strain>
    </source>
</reference>
<reference key="5">
    <citation type="journal article" date="2003" name="Science">
        <title>Empirical analysis of transcriptional activity in the Arabidopsis genome.</title>
        <authorList>
            <person name="Yamada K."/>
            <person name="Lim J."/>
            <person name="Dale J.M."/>
            <person name="Chen H."/>
            <person name="Shinn P."/>
            <person name="Palm C.J."/>
            <person name="Southwick A.M."/>
            <person name="Wu H.C."/>
            <person name="Kim C.J."/>
            <person name="Nguyen M."/>
            <person name="Pham P.K."/>
            <person name="Cheuk R.F."/>
            <person name="Karlin-Newmann G."/>
            <person name="Liu S.X."/>
            <person name="Lam B."/>
            <person name="Sakano H."/>
            <person name="Wu T."/>
            <person name="Yu G."/>
            <person name="Miranda M."/>
            <person name="Quach H.L."/>
            <person name="Tripp M."/>
            <person name="Chang C.H."/>
            <person name="Lee J.M."/>
            <person name="Toriumi M.J."/>
            <person name="Chan M.M."/>
            <person name="Tang C.C."/>
            <person name="Onodera C.S."/>
            <person name="Deng J.M."/>
            <person name="Akiyama K."/>
            <person name="Ansari Y."/>
            <person name="Arakawa T."/>
            <person name="Banh J."/>
            <person name="Banno F."/>
            <person name="Bowser L."/>
            <person name="Brooks S.Y."/>
            <person name="Carninci P."/>
            <person name="Chao Q."/>
            <person name="Choy N."/>
            <person name="Enju A."/>
            <person name="Goldsmith A.D."/>
            <person name="Gurjal M."/>
            <person name="Hansen N.F."/>
            <person name="Hayashizaki Y."/>
            <person name="Johnson-Hopson C."/>
            <person name="Hsuan V.W."/>
            <person name="Iida K."/>
            <person name="Karnes M."/>
            <person name="Khan S."/>
            <person name="Koesema E."/>
            <person name="Ishida J."/>
            <person name="Jiang P.X."/>
            <person name="Jones T."/>
            <person name="Kawai J."/>
            <person name="Kamiya A."/>
            <person name="Meyers C."/>
            <person name="Nakajima M."/>
            <person name="Narusaka M."/>
            <person name="Seki M."/>
            <person name="Sakurai T."/>
            <person name="Satou M."/>
            <person name="Tamse R."/>
            <person name="Vaysberg M."/>
            <person name="Wallender E.K."/>
            <person name="Wong C."/>
            <person name="Yamamura Y."/>
            <person name="Yuan S."/>
            <person name="Shinozaki K."/>
            <person name="Davis R.W."/>
            <person name="Theologis A."/>
            <person name="Ecker J.R."/>
        </authorList>
    </citation>
    <scope>NUCLEOTIDE SEQUENCE [LARGE SCALE MRNA]</scope>
    <source>
        <strain>cv. Columbia</strain>
    </source>
</reference>
<reference key="6">
    <citation type="submission" date="2002-03" db="EMBL/GenBank/DDBJ databases">
        <title>Full-length cDNA from Arabidopsis thaliana.</title>
        <authorList>
            <person name="Brover V.V."/>
            <person name="Troukhan M.E."/>
            <person name="Alexandrov N.A."/>
            <person name="Lu Y.-P."/>
            <person name="Flavell R.B."/>
            <person name="Feldmann K.A."/>
        </authorList>
    </citation>
    <scope>NUCLEOTIDE SEQUENCE [LARGE SCALE MRNA]</scope>
</reference>
<reference key="7">
    <citation type="submission" date="1992-11" db="EMBL/GenBank/DDBJ databases">
        <title>The Arabidopsis thaliana transcribed genome: the GDR cDNA program.</title>
        <authorList>
            <person name="Philipps G."/>
            <person name="Gigot C."/>
        </authorList>
    </citation>
    <scope>NUCLEOTIDE SEQUENCE [MRNA] OF 1-86</scope>
    <source>
        <strain>cv. Columbia</strain>
    </source>
</reference>
<reference key="8">
    <citation type="journal article" date="1994" name="Plant J.">
        <title>Molecular characterization of a beta-type proteasome subunit from Arabidopsis thaliana co-expressed at a high level with an alpha-type proteasome subunit early in the cell cycle.</title>
        <authorList>
            <person name="Genschik P."/>
            <person name="Jamet E."/>
            <person name="Phillips G."/>
            <person name="Parmentier Y."/>
            <person name="Gigot C."/>
            <person name="Fleck J."/>
        </authorList>
    </citation>
    <scope>INDUCTION</scope>
    <source>
        <strain>cv. Columbia</strain>
        <tissue>Leaf</tissue>
    </source>
</reference>
<reference key="9">
    <citation type="journal article" date="1997" name="FEBS Lett.">
        <title>The 20S proteasome gene family in Arabidopsis thaliana.</title>
        <authorList>
            <person name="Parmentier Y."/>
            <person name="Bouchez D."/>
            <person name="Fleck J."/>
            <person name="Genschik P."/>
        </authorList>
    </citation>
    <scope>GENE FAMILY</scope>
    <scope>NOMENCLATURE</scope>
</reference>
<reference key="10">
    <citation type="journal article" date="1999" name="Mol. Biol. Rep.">
        <title>Structure and functional analyses of the 26S proteasome subunits from plants.</title>
        <authorList>
            <person name="Fu H."/>
            <person name="Girod P.-A."/>
            <person name="Doelling J.H."/>
            <person name="van Nocker S."/>
            <person name="Hochstrasser M."/>
            <person name="Finley D."/>
            <person name="Vierstra R.D."/>
        </authorList>
    </citation>
    <scope>SUBUNIT</scope>
</reference>
<reference key="11">
    <citation type="journal article" date="2001" name="EMBO J.">
        <title>SKP1-SnRK protein kinase interactions mediate proteasomal binding of a plant SCF ubiquitin ligase.</title>
        <authorList>
            <person name="Farras R."/>
            <person name="Ferrando A."/>
            <person name="Jasik J."/>
            <person name="Kleinow T."/>
            <person name="Oekresz L."/>
            <person name="Tiburcio A."/>
            <person name="Salchert K."/>
            <person name="del Pozo C."/>
            <person name="Schell J."/>
            <person name="Koncz C."/>
        </authorList>
    </citation>
    <scope>FUNCTION</scope>
    <scope>SUBCELLULAR LOCATION</scope>
    <scope>INTERACTION WITH KIN10; KIN11 AND SKP1A/ASK1</scope>
</reference>
<reference key="12">
    <citation type="journal article" date="2004" name="J. Biol. Chem.">
        <title>Purification of the Arabidopsis 26 S proteasome: biochemical and molecular analyses revealed the presence of multiple isoforms.</title>
        <authorList>
            <person name="Yang P."/>
            <person name="Fu H."/>
            <person name="Walker J."/>
            <person name="Papa C.M."/>
            <person name="Smalle J."/>
            <person name="Ju Y.-M."/>
            <person name="Vierstra R.D."/>
        </authorList>
    </citation>
    <scope>SUBUNIT</scope>
    <scope>IDENTIFICATION BY MASS SPECTROMETRY</scope>
</reference>
<reference key="13">
    <citation type="journal article" date="2010" name="J. Biol. Chem.">
        <title>Affinity purification of the Arabidopsis 26 S proteasome reveals a diverse array of plant proteolytic complexes.</title>
        <authorList>
            <person name="Book A.J."/>
            <person name="Gladman N.P."/>
            <person name="Lee S.S."/>
            <person name="Scalf M."/>
            <person name="Smith L.M."/>
            <person name="Vierstra R.D."/>
        </authorList>
    </citation>
    <scope>IDENTIFICATION BY MASS SPECTROMETRY</scope>
    <scope>CHARACTERIZATION OF THE 26S PROTEASOME COMPLEX</scope>
    <scope>SUBUNIT</scope>
</reference>
<proteinExistence type="evidence at protein level"/>
<dbReference type="EMBL" id="X66825">
    <property type="protein sequence ID" value="CAA47298.1"/>
    <property type="molecule type" value="mRNA"/>
</dbReference>
<dbReference type="EMBL" id="AF043522">
    <property type="protein sequence ID" value="AAC32058.1"/>
    <property type="molecule type" value="mRNA"/>
</dbReference>
<dbReference type="EMBL" id="AL132980">
    <property type="protein sequence ID" value="CAB62648.1"/>
    <property type="molecule type" value="Genomic_DNA"/>
</dbReference>
<dbReference type="EMBL" id="CP002686">
    <property type="protein sequence ID" value="AEE78769.1"/>
    <property type="molecule type" value="Genomic_DNA"/>
</dbReference>
<dbReference type="EMBL" id="AY042820">
    <property type="protein sequence ID" value="AAK68760.1"/>
    <property type="molecule type" value="mRNA"/>
</dbReference>
<dbReference type="EMBL" id="AY052321">
    <property type="protein sequence ID" value="AAK96514.1"/>
    <property type="molecule type" value="mRNA"/>
</dbReference>
<dbReference type="EMBL" id="AY061899">
    <property type="protein sequence ID" value="AAL31226.1"/>
    <property type="molecule type" value="mRNA"/>
</dbReference>
<dbReference type="EMBL" id="AY081448">
    <property type="protein sequence ID" value="AAM10010.1"/>
    <property type="molecule type" value="mRNA"/>
</dbReference>
<dbReference type="EMBL" id="AY087443">
    <property type="protein sequence ID" value="AAM64989.1"/>
    <property type="molecule type" value="mRNA"/>
</dbReference>
<dbReference type="EMBL" id="Z17987">
    <property type="protein sequence ID" value="CAA79082.1"/>
    <property type="molecule type" value="mRNA"/>
</dbReference>
<dbReference type="PIR" id="S29240">
    <property type="entry name" value="S29240"/>
</dbReference>
<dbReference type="RefSeq" id="NP_190694.1">
    <molecule id="P30186-1"/>
    <property type="nucleotide sequence ID" value="NM_114985.3"/>
</dbReference>
<dbReference type="SMR" id="P30186"/>
<dbReference type="BioGRID" id="9607">
    <property type="interactions" value="83"/>
</dbReference>
<dbReference type="FunCoup" id="P30186">
    <property type="interactions" value="3434"/>
</dbReference>
<dbReference type="IntAct" id="P30186">
    <property type="interactions" value="4"/>
</dbReference>
<dbReference type="STRING" id="3702.P30186"/>
<dbReference type="PaxDb" id="3702-AT3G51260.1"/>
<dbReference type="ProteomicsDB" id="226488">
    <molecule id="P30186-1"/>
</dbReference>
<dbReference type="EnsemblPlants" id="AT3G51260.1">
    <molecule id="P30186-1"/>
    <property type="protein sequence ID" value="AT3G51260.1"/>
    <property type="gene ID" value="AT3G51260"/>
</dbReference>
<dbReference type="GeneID" id="824289"/>
<dbReference type="Gramene" id="AT3G51260.1">
    <molecule id="P30186-1"/>
    <property type="protein sequence ID" value="AT3G51260.1"/>
    <property type="gene ID" value="AT3G51260"/>
</dbReference>
<dbReference type="KEGG" id="ath:AT3G51260"/>
<dbReference type="Araport" id="AT3G51260"/>
<dbReference type="TAIR" id="AT3G51260">
    <property type="gene designation" value="PAD1"/>
</dbReference>
<dbReference type="eggNOG" id="KOG0183">
    <property type="taxonomic scope" value="Eukaryota"/>
</dbReference>
<dbReference type="InParanoid" id="P30186"/>
<dbReference type="OMA" id="AGTHSEW"/>
<dbReference type="OrthoDB" id="431557at2759"/>
<dbReference type="PhylomeDB" id="P30186"/>
<dbReference type="CD-CODE" id="4299E36E">
    <property type="entry name" value="Nucleolus"/>
</dbReference>
<dbReference type="PRO" id="PR:P30186"/>
<dbReference type="Proteomes" id="UP000006548">
    <property type="component" value="Chromosome 3"/>
</dbReference>
<dbReference type="ExpressionAtlas" id="P30186">
    <property type="expression patterns" value="baseline and differential"/>
</dbReference>
<dbReference type="GO" id="GO:0005829">
    <property type="term" value="C:cytosol"/>
    <property type="evidence" value="ECO:0007005"/>
    <property type="project" value="TAIR"/>
</dbReference>
<dbReference type="GO" id="GO:0022626">
    <property type="term" value="C:cytosolic ribosome"/>
    <property type="evidence" value="ECO:0007005"/>
    <property type="project" value="TAIR"/>
</dbReference>
<dbReference type="GO" id="GO:0005634">
    <property type="term" value="C:nucleus"/>
    <property type="evidence" value="ECO:0000314"/>
    <property type="project" value="TAIR"/>
</dbReference>
<dbReference type="GO" id="GO:0009524">
    <property type="term" value="C:phragmoplast"/>
    <property type="evidence" value="ECO:0000314"/>
    <property type="project" value="TAIR"/>
</dbReference>
<dbReference type="GO" id="GO:0000325">
    <property type="term" value="C:plant-type vacuole"/>
    <property type="evidence" value="ECO:0007005"/>
    <property type="project" value="TAIR"/>
</dbReference>
<dbReference type="GO" id="GO:0000502">
    <property type="term" value="C:proteasome complex"/>
    <property type="evidence" value="ECO:0000314"/>
    <property type="project" value="TAIR"/>
</dbReference>
<dbReference type="GO" id="GO:0019773">
    <property type="term" value="C:proteasome core complex, alpha-subunit complex"/>
    <property type="evidence" value="ECO:0000250"/>
    <property type="project" value="UniProtKB"/>
</dbReference>
<dbReference type="GO" id="GO:0005819">
    <property type="term" value="C:spindle"/>
    <property type="evidence" value="ECO:0000314"/>
    <property type="project" value="TAIR"/>
</dbReference>
<dbReference type="GO" id="GO:0005773">
    <property type="term" value="C:vacuole"/>
    <property type="evidence" value="ECO:0007005"/>
    <property type="project" value="TAIR"/>
</dbReference>
<dbReference type="GO" id="GO:0006511">
    <property type="term" value="P:ubiquitin-dependent protein catabolic process"/>
    <property type="evidence" value="ECO:0007669"/>
    <property type="project" value="InterPro"/>
</dbReference>
<dbReference type="CDD" id="cd03755">
    <property type="entry name" value="proteasome_alpha_type_7"/>
    <property type="match status" value="1"/>
</dbReference>
<dbReference type="FunFam" id="3.60.20.10:FF:000004">
    <property type="entry name" value="Proteasome subunit alpha type-4"/>
    <property type="match status" value="1"/>
</dbReference>
<dbReference type="Gene3D" id="3.60.20.10">
    <property type="entry name" value="Glutamine Phosphoribosylpyrophosphate, subunit 1, domain 1"/>
    <property type="match status" value="1"/>
</dbReference>
<dbReference type="InterPro" id="IPR029055">
    <property type="entry name" value="Ntn_hydrolases_N"/>
</dbReference>
<dbReference type="InterPro" id="IPR050115">
    <property type="entry name" value="Proteasome_alpha"/>
</dbReference>
<dbReference type="InterPro" id="IPR023332">
    <property type="entry name" value="Proteasome_alpha-type"/>
</dbReference>
<dbReference type="InterPro" id="IPR000426">
    <property type="entry name" value="Proteasome_asu_N"/>
</dbReference>
<dbReference type="InterPro" id="IPR001353">
    <property type="entry name" value="Proteasome_sua/b"/>
</dbReference>
<dbReference type="NCBIfam" id="NF003075">
    <property type="entry name" value="PRK03996.1"/>
    <property type="match status" value="1"/>
</dbReference>
<dbReference type="PANTHER" id="PTHR11599">
    <property type="entry name" value="PROTEASOME SUBUNIT ALPHA/BETA"/>
    <property type="match status" value="1"/>
</dbReference>
<dbReference type="Pfam" id="PF00227">
    <property type="entry name" value="Proteasome"/>
    <property type="match status" value="1"/>
</dbReference>
<dbReference type="Pfam" id="PF10584">
    <property type="entry name" value="Proteasome_A_N"/>
    <property type="match status" value="1"/>
</dbReference>
<dbReference type="SMART" id="SM00948">
    <property type="entry name" value="Proteasome_A_N"/>
    <property type="match status" value="1"/>
</dbReference>
<dbReference type="SUPFAM" id="SSF56235">
    <property type="entry name" value="N-terminal nucleophile aminohydrolases (Ntn hydrolases)"/>
    <property type="match status" value="1"/>
</dbReference>
<dbReference type="PROSITE" id="PS00388">
    <property type="entry name" value="PROTEASOME_ALPHA_1"/>
    <property type="match status" value="1"/>
</dbReference>
<dbReference type="PROSITE" id="PS51475">
    <property type="entry name" value="PROTEASOME_ALPHA_2"/>
    <property type="match status" value="1"/>
</dbReference>
<sequence length="250" mass="27337">MARYDRAITVFSPDGHLFQVEYALEAVRKGNAAVGVRGTDTVVLAVEKKSTPKLQDSRSARKIVSLDNHIALACAGLKADARVLINKARIECQSHRLTLEDPVTVEYITRYIAGLQQKYTQSGGVRPFGLSTLIVGFDPYTRIPALYQTDPSGTFSAWKANATGRNSNSIREFLEKNYKESAGQETVKLAIRALLEVVESGGKNIEVAVMTREEGVLKQLEEEEIDIIVAEIEAEKAAAEAAKKGPAKET</sequence>
<gene>
    <name type="primary">PAD1</name>
    <name type="synonym">PRC6A</name>
    <name type="ordered locus">At3g51260</name>
    <name type="ORF">F24M12.300</name>
</gene>
<protein>
    <recommendedName>
        <fullName>Proteasome subunit alpha type-7-A</fullName>
    </recommendedName>
    <alternativeName>
        <fullName>20S proteasome alpha subunit D-1</fullName>
    </alternativeName>
    <alternativeName>
        <fullName>Proteasome component 6A</fullName>
    </alternativeName>
    <alternativeName>
        <fullName>Proteasome subunit alpha type-4</fullName>
    </alternativeName>
    <alternativeName>
        <fullName>TAS-G64</fullName>
    </alternativeName>
</protein>
<accession>P30186</accession>
<accession>Q41942</accession>
<accession>Q8LB36</accession>
<name>PSA7A_ARATH</name>
<feature type="chain" id="PRO_0000124159" description="Proteasome subunit alpha type-7-A">
    <location>
        <begin position="1"/>
        <end position="250"/>
    </location>
</feature>
<feature type="cross-link" description="Glycyl lysine isopeptide (Lys-Gly) (interchain with G-Cter in ubiquitin)" evidence="2">
    <location>
        <position position="62"/>
    </location>
</feature>
<feature type="sequence conflict" description="In Ref. 7; CAA79082." evidence="10" ref="7">
    <original>G</original>
    <variation>N</variation>
    <location>
        <position position="15"/>
    </location>
</feature>
<feature type="sequence conflict" description="In Ref. 6; AAM64989." evidence="10" ref="6">
    <original>V</original>
    <variation>L</variation>
    <location>
        <position position="27"/>
    </location>
</feature>
<evidence type="ECO:0000250" key="1"/>
<evidence type="ECO:0000250" key="2">
    <source>
        <dbReference type="UniProtKB" id="O81149"/>
    </source>
</evidence>
<evidence type="ECO:0000255" key="3">
    <source>
        <dbReference type="PROSITE-ProRule" id="PRU00808"/>
    </source>
</evidence>
<evidence type="ECO:0000269" key="4">
    <source>
    </source>
</evidence>
<evidence type="ECO:0000269" key="5">
    <source>
    </source>
</evidence>
<evidence type="ECO:0000269" key="6">
    <source>
    </source>
</evidence>
<evidence type="ECO:0000269" key="7">
    <source>
    </source>
</evidence>
<evidence type="ECO:0000269" key="8">
    <source>
    </source>
</evidence>
<evidence type="ECO:0000269" key="9">
    <source>
    </source>
</evidence>
<evidence type="ECO:0000305" key="10"/>
<keyword id="KW-0025">Alternative splicing</keyword>
<keyword id="KW-0963">Cytoplasm</keyword>
<keyword id="KW-1017">Isopeptide bond</keyword>
<keyword id="KW-0539">Nucleus</keyword>
<keyword id="KW-0647">Proteasome</keyword>
<keyword id="KW-1185">Reference proteome</keyword>
<keyword id="KW-0832">Ubl conjugation</keyword>
<comment type="function">
    <text evidence="5">The proteasome is a multicatalytic proteinase complex which is characterized by its ability to cleave peptides with Arg, Phe, Tyr, Leu, and Glu adjacent to the leaving group at neutral or slightly basic pH. The proteasome has an ATP-dependent proteolytic activity. Mediates the association of the SCF(TIR1) E3 ubiquitin ligase complex with the proteasome.</text>
</comment>
<comment type="subunit">
    <text evidence="4 5 6 8">Component of the 20S core complex of the 26S proteasome. The 26S proteasome is composed of a core protease (CP), known as the 20S proteasome, capped at one or both ends by the 19S regulatory particle (RP/PA700). The 20S proteasome core is composed of 28 subunits that are arranged in four stacked rings, resulting in a barrel-shaped structure. The two end rings are each formed by seven alpha subunits, and the two central rings are each formed by seven beta subunits. The catalytic chamber with the active sites is on the inside of the barrel. Interacts with KIN10 and KIN11 SnRK subunits, and with the SKP1A/ASK1 subunit of the SCF E3 ubiquitin ligase complex.</text>
</comment>
<comment type="subcellular location">
    <subcellularLocation>
        <location evidence="1">Cytoplasm</location>
    </subcellularLocation>
    <subcellularLocation>
        <location evidence="5">Nucleus</location>
    </subcellularLocation>
</comment>
<comment type="alternative products">
    <event type="alternative splicing"/>
    <isoform>
        <id>P30186-1</id>
        <name>1</name>
        <sequence type="displayed"/>
    </isoform>
    <text>A number of isoforms are produced. According to EST sequences.</text>
</comment>
<comment type="tissue specificity">
    <text evidence="7">Expressed in roots, leaves and flowers.</text>
</comment>
<comment type="induction">
    <text evidence="9">During cell proliferation.</text>
</comment>
<comment type="similarity">
    <text evidence="3">Belongs to the peptidase T1A family.</text>
</comment>